<accession>P0AFK9</accession>
<accession>P23861</accession>
<evidence type="ECO:0000269" key="1">
    <source>
    </source>
</evidence>
<evidence type="ECO:0000269" key="2">
    <source>
    </source>
</evidence>
<evidence type="ECO:0000269" key="3">
    <source>
    </source>
</evidence>
<evidence type="ECO:0000269" key="4">
    <source ref="5"/>
</evidence>
<evidence type="ECO:0000305" key="5"/>
<evidence type="ECO:0007829" key="6">
    <source>
        <dbReference type="PDB" id="1POT"/>
    </source>
</evidence>
<evidence type="ECO:0007829" key="7">
    <source>
        <dbReference type="PDB" id="1POY"/>
    </source>
</evidence>
<organism>
    <name type="scientific">Escherichia coli (strain K12)</name>
    <dbReference type="NCBI Taxonomy" id="83333"/>
    <lineage>
        <taxon>Bacteria</taxon>
        <taxon>Pseudomonadati</taxon>
        <taxon>Pseudomonadota</taxon>
        <taxon>Gammaproteobacteria</taxon>
        <taxon>Enterobacterales</taxon>
        <taxon>Enterobacteriaceae</taxon>
        <taxon>Escherichia</taxon>
    </lineage>
</organism>
<name>POTD_ECOLI</name>
<keyword id="KW-0002">3D-structure</keyword>
<keyword id="KW-0903">Direct protein sequencing</keyword>
<keyword id="KW-0574">Periplasm</keyword>
<keyword id="KW-1185">Reference proteome</keyword>
<keyword id="KW-0732">Signal</keyword>
<keyword id="KW-0813">Transport</keyword>
<gene>
    <name type="primary">potD</name>
    <name type="ordered locus">b1123</name>
    <name type="ordered locus">JW1109</name>
</gene>
<feature type="signal peptide" evidence="1 3 4">
    <location>
        <begin position="1"/>
        <end position="23"/>
    </location>
</feature>
<feature type="chain" id="PRO_0000031837" description="Spermidine/putrescine-binding periplasmic protein">
    <location>
        <begin position="24"/>
        <end position="348"/>
    </location>
</feature>
<feature type="binding site" evidence="2">
    <location>
        <position position="36"/>
    </location>
    <ligand>
        <name>spermidine</name>
        <dbReference type="ChEBI" id="CHEBI:57834"/>
    </ligand>
</feature>
<feature type="binding site" evidence="2">
    <location>
        <position position="85"/>
    </location>
    <ligand>
        <name>spermidine</name>
        <dbReference type="ChEBI" id="CHEBI:57834"/>
    </ligand>
</feature>
<feature type="binding site" evidence="2">
    <location>
        <begin position="168"/>
        <end position="171"/>
    </location>
    <ligand>
        <name>spermidine</name>
        <dbReference type="ChEBI" id="CHEBI:57834"/>
    </ligand>
</feature>
<feature type="binding site" evidence="2">
    <location>
        <position position="327"/>
    </location>
    <ligand>
        <name>spermidine</name>
        <dbReference type="ChEBI" id="CHEBI:57834"/>
    </ligand>
</feature>
<feature type="strand" evidence="6">
    <location>
        <begin position="27"/>
        <end position="38"/>
    </location>
</feature>
<feature type="helix" evidence="6">
    <location>
        <begin position="42"/>
        <end position="50"/>
    </location>
</feature>
<feature type="strand" evidence="6">
    <location>
        <begin position="52"/>
        <end position="60"/>
    </location>
</feature>
<feature type="helix" evidence="6">
    <location>
        <begin position="62"/>
        <end position="69"/>
    </location>
</feature>
<feature type="strand" evidence="6">
    <location>
        <begin position="73"/>
        <end position="75"/>
    </location>
</feature>
<feature type="strand" evidence="6">
    <location>
        <begin position="77"/>
        <end position="80"/>
    </location>
</feature>
<feature type="helix" evidence="6">
    <location>
        <begin position="84"/>
        <end position="86"/>
    </location>
</feature>
<feature type="helix" evidence="6">
    <location>
        <begin position="87"/>
        <end position="93"/>
    </location>
</feature>
<feature type="helix" evidence="7">
    <location>
        <begin position="101"/>
        <end position="103"/>
    </location>
</feature>
<feature type="helix" evidence="6">
    <location>
        <begin position="107"/>
        <end position="109"/>
    </location>
</feature>
<feature type="helix" evidence="6">
    <location>
        <begin position="112"/>
        <end position="114"/>
    </location>
</feature>
<feature type="strand" evidence="6">
    <location>
        <begin position="127"/>
        <end position="139"/>
    </location>
</feature>
<feature type="turn" evidence="6">
    <location>
        <begin position="140"/>
        <end position="142"/>
    </location>
</feature>
<feature type="turn" evidence="6">
    <location>
        <begin position="145"/>
        <end position="147"/>
    </location>
</feature>
<feature type="helix" evidence="6">
    <location>
        <begin position="152"/>
        <end position="155"/>
    </location>
</feature>
<feature type="helix" evidence="6">
    <location>
        <begin position="157"/>
        <end position="159"/>
    </location>
</feature>
<feature type="strand" evidence="6">
    <location>
        <begin position="163"/>
        <end position="165"/>
    </location>
</feature>
<feature type="helix" evidence="6">
    <location>
        <begin position="169"/>
        <end position="179"/>
    </location>
</feature>
<feature type="helix" evidence="6">
    <location>
        <begin position="189"/>
        <end position="201"/>
    </location>
</feature>
<feature type="helix" evidence="6">
    <location>
        <begin position="203"/>
        <end position="205"/>
    </location>
</feature>
<feature type="strand" evidence="6">
    <location>
        <begin position="206"/>
        <end position="209"/>
    </location>
</feature>
<feature type="helix" evidence="6">
    <location>
        <begin position="215"/>
        <end position="219"/>
    </location>
</feature>
<feature type="strand" evidence="6">
    <location>
        <begin position="224"/>
        <end position="229"/>
    </location>
</feature>
<feature type="helix" evidence="6">
    <location>
        <begin position="230"/>
        <end position="237"/>
    </location>
</feature>
<feature type="strand" evidence="6">
    <location>
        <begin position="243"/>
        <end position="246"/>
    </location>
</feature>
<feature type="strand" evidence="6">
    <location>
        <begin position="253"/>
        <end position="260"/>
    </location>
</feature>
<feature type="helix" evidence="6">
    <location>
        <begin position="268"/>
        <end position="279"/>
    </location>
</feature>
<feature type="helix" evidence="6">
    <location>
        <begin position="281"/>
        <end position="291"/>
    </location>
</feature>
<feature type="strand" evidence="6">
    <location>
        <begin position="296"/>
        <end position="298"/>
    </location>
</feature>
<feature type="turn" evidence="6">
    <location>
        <begin position="299"/>
        <end position="303"/>
    </location>
</feature>
<feature type="helix" evidence="6">
    <location>
        <begin position="306"/>
        <end position="309"/>
    </location>
</feature>
<feature type="turn" evidence="6">
    <location>
        <begin position="312"/>
        <end position="314"/>
    </location>
</feature>
<feature type="helix" evidence="6">
    <location>
        <begin position="318"/>
        <end position="323"/>
    </location>
</feature>
<feature type="strand" evidence="6">
    <location>
        <begin position="324"/>
        <end position="326"/>
    </location>
</feature>
<feature type="helix" evidence="6">
    <location>
        <begin position="331"/>
        <end position="333"/>
    </location>
</feature>
<feature type="helix" evidence="6">
    <location>
        <begin position="334"/>
        <end position="344"/>
    </location>
</feature>
<reference key="1">
    <citation type="journal article" date="1991" name="J. Biol. Chem.">
        <title>Characteristics of the gene for a spermidine and putrescine transport system that maps at 15 min on the Escherichia coli chromosome.</title>
        <authorList>
            <person name="Furuchi T."/>
            <person name="Kashiwagi K."/>
            <person name="Kobayashi H."/>
            <person name="Igarashi K."/>
        </authorList>
    </citation>
    <scope>NUCLEOTIDE SEQUENCE [GENOMIC DNA]</scope>
    <scope>PROTEIN SEQUENCE OF 24-53</scope>
    <scope>FUNCTION</scope>
    <scope>SUBCELLULAR LOCATION</scope>
    <source>
        <strain>K12</strain>
    </source>
</reference>
<reference key="2">
    <citation type="journal article" date="1996" name="DNA Res.">
        <title>A 718-kb DNA sequence of the Escherichia coli K-12 genome corresponding to the 12.7-28.0 min region on the linkage map.</title>
        <authorList>
            <person name="Oshima T."/>
            <person name="Aiba H."/>
            <person name="Baba T."/>
            <person name="Fujita K."/>
            <person name="Hayashi K."/>
            <person name="Honjo A."/>
            <person name="Ikemoto K."/>
            <person name="Inada T."/>
            <person name="Itoh T."/>
            <person name="Kajihara M."/>
            <person name="Kanai K."/>
            <person name="Kashimoto K."/>
            <person name="Kimura S."/>
            <person name="Kitagawa M."/>
            <person name="Makino K."/>
            <person name="Masuda S."/>
            <person name="Miki T."/>
            <person name="Mizobuchi K."/>
            <person name="Mori H."/>
            <person name="Motomura K."/>
            <person name="Nakamura Y."/>
            <person name="Nashimoto H."/>
            <person name="Nishio Y."/>
            <person name="Saito N."/>
            <person name="Sampei G."/>
            <person name="Seki Y."/>
            <person name="Tagami H."/>
            <person name="Takemoto K."/>
            <person name="Wada C."/>
            <person name="Yamamoto Y."/>
            <person name="Yano M."/>
            <person name="Horiuchi T."/>
        </authorList>
    </citation>
    <scope>NUCLEOTIDE SEQUENCE [LARGE SCALE GENOMIC DNA]</scope>
    <source>
        <strain>K12 / W3110 / ATCC 27325 / DSM 5911</strain>
    </source>
</reference>
<reference key="3">
    <citation type="journal article" date="1997" name="Science">
        <title>The complete genome sequence of Escherichia coli K-12.</title>
        <authorList>
            <person name="Blattner F.R."/>
            <person name="Plunkett G. III"/>
            <person name="Bloch C.A."/>
            <person name="Perna N.T."/>
            <person name="Burland V."/>
            <person name="Riley M."/>
            <person name="Collado-Vides J."/>
            <person name="Glasner J.D."/>
            <person name="Rode C.K."/>
            <person name="Mayhew G.F."/>
            <person name="Gregor J."/>
            <person name="Davis N.W."/>
            <person name="Kirkpatrick H.A."/>
            <person name="Goeden M.A."/>
            <person name="Rose D.J."/>
            <person name="Mau B."/>
            <person name="Shao Y."/>
        </authorList>
    </citation>
    <scope>NUCLEOTIDE SEQUENCE [LARGE SCALE GENOMIC DNA]</scope>
    <source>
        <strain>K12 / MG1655 / ATCC 47076</strain>
    </source>
</reference>
<reference key="4">
    <citation type="journal article" date="2006" name="Mol. Syst. Biol.">
        <title>Highly accurate genome sequences of Escherichia coli K-12 strains MG1655 and W3110.</title>
        <authorList>
            <person name="Hayashi K."/>
            <person name="Morooka N."/>
            <person name="Yamamoto Y."/>
            <person name="Fujita K."/>
            <person name="Isono K."/>
            <person name="Choi S."/>
            <person name="Ohtsubo E."/>
            <person name="Baba T."/>
            <person name="Wanner B.L."/>
            <person name="Mori H."/>
            <person name="Horiuchi T."/>
        </authorList>
    </citation>
    <scope>NUCLEOTIDE SEQUENCE [LARGE SCALE GENOMIC DNA]</scope>
    <source>
        <strain>K12 / W3110 / ATCC 27325 / DSM 5911</strain>
    </source>
</reference>
<reference key="5">
    <citation type="submission" date="1994-09" db="UniProtKB">
        <authorList>
            <person name="Pasquali C."/>
            <person name="Sanchez J.-C."/>
            <person name="Ravier F."/>
            <person name="Golaz O."/>
            <person name="Hughes G.J."/>
            <person name="Frutiger S."/>
            <person name="Paquet N."/>
            <person name="Wilkins M."/>
            <person name="Appel R.D."/>
            <person name="Bairoch A."/>
            <person name="Hochstrasser D.F."/>
        </authorList>
    </citation>
    <scope>PROTEIN SEQUENCE OF 24-33</scope>
    <source>
        <strain>K12 / W3110 / ATCC 27325 / DSM 5911</strain>
    </source>
</reference>
<reference key="6">
    <citation type="journal article" date="1997" name="Electrophoresis">
        <title>Comparing the predicted and observed properties of proteins encoded in the genome of Escherichia coli K-12.</title>
        <authorList>
            <person name="Link A.J."/>
            <person name="Robison K."/>
            <person name="Church G.M."/>
        </authorList>
    </citation>
    <scope>PROTEIN SEQUENCE OF 24-35</scope>
    <source>
        <strain>K12 / EMG2</strain>
    </source>
</reference>
<reference key="7">
    <citation type="journal article" date="1994" name="FEBS Lett.">
        <title>Prediction of the structural similarity between spermidine/putrescine-binding protein and maltose-binding protein.</title>
        <authorList>
            <person name="Matsuo Y."/>
            <person name="Nishikawa K."/>
        </authorList>
    </citation>
    <scope>3D-STRUCTURE MODELING</scope>
</reference>
<reference key="8">
    <citation type="journal article" date="1996" name="J. Biol. Chem.">
        <title>Crystal structure of PotD, the primary receptor of the polyamine transport system in Escherichia coli.</title>
        <authorList>
            <person name="Sugiyama S."/>
            <person name="Vassylyev D.G."/>
            <person name="Matsushima M."/>
            <person name="Kashiwagi K."/>
            <person name="Igarashi K."/>
            <person name="Morikawa K."/>
        </authorList>
    </citation>
    <scope>X-RAY CRYSTALLOGRAPHY (2.5 ANGSTROMS)</scope>
</reference>
<reference key="9">
    <citation type="journal article" date="1996" name="Protein Sci.">
        <title>The 1.8-A X-ray structure of the Escherichia coli PotD protein complexed with spermidine and the mechanism of polyamine binding.</title>
        <authorList>
            <person name="Sugiyama S."/>
            <person name="Matsuo Y."/>
            <person name="Maenaka K."/>
            <person name="Vassylyev D.G."/>
            <person name="Matsushima M."/>
            <person name="Kashiwagi K."/>
            <person name="Igarashi K."/>
            <person name="Morikawa K."/>
        </authorList>
    </citation>
    <scope>X-RAY CRYSTALLOGRAPHY (1.8 ANGSTROMS) IN COMPLEX WITH SPERMIDINE</scope>
</reference>
<proteinExistence type="evidence at protein level"/>
<protein>
    <recommendedName>
        <fullName>Spermidine/putrescine-binding periplasmic protein</fullName>
        <shortName>SPBP</shortName>
    </recommendedName>
</protein>
<comment type="function">
    <text evidence="1">Required for the activity of the bacterial periplasmic transport system of putrescine and spermidine. Polyamine binding protein.</text>
</comment>
<comment type="subcellular location">
    <subcellularLocation>
        <location evidence="1">Periplasm</location>
    </subcellularLocation>
</comment>
<comment type="similarity">
    <text evidence="5">Belongs to the bacterial solute-binding protein PotD/PotF family.</text>
</comment>
<sequence length="348" mass="38867">MKKWSRHLLAAGALALGMSAAHADDNNTLYFYNWTEYVPPGLLEQFTKETGIKVIYSTYESNETMYAKLKTYKDGAYDLVVPSTYYVDKMRKEGMIQKIDKSKLTNFSNLDPDMLNKPFDPNNDYSIPYIWGATAIGVNGDAVDPKSVTSWADLWKPEYKGSLLLTDDAREVFQMALRKLGYSGNTTDPKEIEAAYNELKKLMPNVAAFNSDNPANPYMEGEVNLGMIWNGSAFVARQAGTPIDVVWPKEGGIFWMDSLAIPANAKNKEGALKLINFLLRPDVAKQVAETIGYPTPNLAARKLLSPEVANDKTLYPDAETIKNGEWQNDVGAASSIYEEYYQKLKAGR</sequence>
<dbReference type="EMBL" id="M64519">
    <property type="protein sequence ID" value="AAC37041.1"/>
    <property type="molecule type" value="Genomic_DNA"/>
</dbReference>
<dbReference type="EMBL" id="U00096">
    <property type="protein sequence ID" value="AAC74207.1"/>
    <property type="molecule type" value="Genomic_DNA"/>
</dbReference>
<dbReference type="EMBL" id="AP009048">
    <property type="protein sequence ID" value="BAA35943.1"/>
    <property type="molecule type" value="Genomic_DNA"/>
</dbReference>
<dbReference type="PIR" id="D40840">
    <property type="entry name" value="D40840"/>
</dbReference>
<dbReference type="RefSeq" id="NP_415641.1">
    <property type="nucleotide sequence ID" value="NC_000913.3"/>
</dbReference>
<dbReference type="RefSeq" id="WP_000759317.1">
    <property type="nucleotide sequence ID" value="NZ_STEB01000016.1"/>
</dbReference>
<dbReference type="PDB" id="1POT">
    <property type="method" value="X-ray"/>
    <property type="resolution" value="1.80 A"/>
    <property type="chains" value="A=24-348"/>
</dbReference>
<dbReference type="PDB" id="1POY">
    <property type="method" value="X-ray"/>
    <property type="resolution" value="2.50 A"/>
    <property type="chains" value="1/2/3/4=26-348"/>
</dbReference>
<dbReference type="PDB" id="8Y5H">
    <property type="method" value="EM"/>
    <property type="resolution" value="3.10 A"/>
    <property type="chains" value="E=1-348"/>
</dbReference>
<dbReference type="PDB" id="8Y5I">
    <property type="method" value="EM"/>
    <property type="resolution" value="3.00 A"/>
    <property type="chains" value="E=1-348"/>
</dbReference>
<dbReference type="PDBsum" id="1POT"/>
<dbReference type="PDBsum" id="1POY"/>
<dbReference type="PDBsum" id="8Y5H"/>
<dbReference type="PDBsum" id="8Y5I"/>
<dbReference type="EMDB" id="EMD-38935"/>
<dbReference type="SMR" id="P0AFK9"/>
<dbReference type="BioGRID" id="4261797">
    <property type="interactions" value="64"/>
</dbReference>
<dbReference type="ComplexPortal" id="CPX-4383">
    <property type="entry name" value="Spermidine ABC transporter complex"/>
</dbReference>
<dbReference type="FunCoup" id="P0AFK9">
    <property type="interactions" value="300"/>
</dbReference>
<dbReference type="IntAct" id="P0AFK9">
    <property type="interactions" value="7"/>
</dbReference>
<dbReference type="STRING" id="511145.b1123"/>
<dbReference type="DrugBank" id="DB03566">
    <property type="generic name" value="Spermidine"/>
</dbReference>
<dbReference type="TCDB" id="3.A.1.11.1">
    <property type="family name" value="the atp-binding cassette (abc) superfamily"/>
</dbReference>
<dbReference type="jPOST" id="P0AFK9"/>
<dbReference type="PaxDb" id="511145-b1123"/>
<dbReference type="EnsemblBacteria" id="AAC74207">
    <property type="protein sequence ID" value="AAC74207"/>
    <property type="gene ID" value="b1123"/>
</dbReference>
<dbReference type="GeneID" id="86863622"/>
<dbReference type="GeneID" id="945682"/>
<dbReference type="KEGG" id="ecj:JW1109"/>
<dbReference type="KEGG" id="eco:b1123"/>
<dbReference type="KEGG" id="ecoc:C3026_06760"/>
<dbReference type="PATRIC" id="fig|1411691.4.peg.1144"/>
<dbReference type="EchoBASE" id="EB0745"/>
<dbReference type="eggNOG" id="COG0687">
    <property type="taxonomic scope" value="Bacteria"/>
</dbReference>
<dbReference type="HOGENOM" id="CLU_026974_1_3_6"/>
<dbReference type="InParanoid" id="P0AFK9"/>
<dbReference type="OMA" id="FWMDNYA"/>
<dbReference type="OrthoDB" id="9769319at2"/>
<dbReference type="PhylomeDB" id="P0AFK9"/>
<dbReference type="BioCyc" id="EcoCyc:POTD-MONOMER"/>
<dbReference type="BioCyc" id="MetaCyc:POTD-MONOMER"/>
<dbReference type="EvolutionaryTrace" id="P0AFK9"/>
<dbReference type="PRO" id="PR:P0AFK9"/>
<dbReference type="Proteomes" id="UP000000625">
    <property type="component" value="Chromosome"/>
</dbReference>
<dbReference type="GO" id="GO:0016020">
    <property type="term" value="C:membrane"/>
    <property type="evidence" value="ECO:0000303"/>
    <property type="project" value="ComplexPortal"/>
</dbReference>
<dbReference type="GO" id="GO:0030288">
    <property type="term" value="C:outer membrane-bounded periplasmic space"/>
    <property type="evidence" value="ECO:0000314"/>
    <property type="project" value="EcoCyc"/>
</dbReference>
<dbReference type="GO" id="GO:0019810">
    <property type="term" value="F:putrescine binding"/>
    <property type="evidence" value="ECO:0000314"/>
    <property type="project" value="EcoCyc"/>
</dbReference>
<dbReference type="GO" id="GO:0019809">
    <property type="term" value="F:spermidine binding"/>
    <property type="evidence" value="ECO:0000314"/>
    <property type="project" value="EcoCyc"/>
</dbReference>
<dbReference type="GO" id="GO:0015847">
    <property type="term" value="P:putrescine transport"/>
    <property type="evidence" value="ECO:0000314"/>
    <property type="project" value="EcoCyc"/>
</dbReference>
<dbReference type="GO" id="GO:1903711">
    <property type="term" value="P:spermidine transmembrane transport"/>
    <property type="evidence" value="ECO:0000303"/>
    <property type="project" value="ComplexPortal"/>
</dbReference>
<dbReference type="GO" id="GO:0015848">
    <property type="term" value="P:spermidine transport"/>
    <property type="evidence" value="ECO:0000314"/>
    <property type="project" value="EcoCyc"/>
</dbReference>
<dbReference type="CDD" id="cd13660">
    <property type="entry name" value="PBP2_PotD"/>
    <property type="match status" value="1"/>
</dbReference>
<dbReference type="FunFam" id="3.40.190.10:FF:000062">
    <property type="entry name" value="Putrescine-binding periplasmic protein"/>
    <property type="match status" value="1"/>
</dbReference>
<dbReference type="Gene3D" id="3.40.190.10">
    <property type="entry name" value="Periplasmic binding protein-like II"/>
    <property type="match status" value="2"/>
</dbReference>
<dbReference type="InterPro" id="IPR006059">
    <property type="entry name" value="SBP"/>
</dbReference>
<dbReference type="InterPro" id="IPR001188">
    <property type="entry name" value="Sperm_putr-bd"/>
</dbReference>
<dbReference type="NCBIfam" id="NF007048">
    <property type="entry name" value="PRK09501.1"/>
    <property type="match status" value="1"/>
</dbReference>
<dbReference type="PANTHER" id="PTHR30222">
    <property type="entry name" value="SPERMIDINE/PUTRESCINE-BINDING PERIPLASMIC PROTEIN"/>
    <property type="match status" value="1"/>
</dbReference>
<dbReference type="PANTHER" id="PTHR30222:SF17">
    <property type="entry name" value="SPERMIDINE_PUTRESCINE-BINDING PERIPLASMIC PROTEIN"/>
    <property type="match status" value="1"/>
</dbReference>
<dbReference type="Pfam" id="PF13416">
    <property type="entry name" value="SBP_bac_8"/>
    <property type="match status" value="1"/>
</dbReference>
<dbReference type="PIRSF" id="PIRSF019574">
    <property type="entry name" value="Periplasmic_polyamine_BP"/>
    <property type="match status" value="1"/>
</dbReference>
<dbReference type="PRINTS" id="PR00909">
    <property type="entry name" value="SPERMDNBNDNG"/>
</dbReference>
<dbReference type="SUPFAM" id="SSF53850">
    <property type="entry name" value="Periplasmic binding protein-like II"/>
    <property type="match status" value="1"/>
</dbReference>